<name>BOR2_ARATH</name>
<dbReference type="EMBL" id="AL138651">
    <property type="protein sequence ID" value="CAB71887.1"/>
    <property type="molecule type" value="Genomic_DNA"/>
</dbReference>
<dbReference type="EMBL" id="CP002686">
    <property type="protein sequence ID" value="AEE80330.1"/>
    <property type="molecule type" value="Genomic_DNA"/>
</dbReference>
<dbReference type="EMBL" id="AY074323">
    <property type="protein sequence ID" value="AAL67019.1"/>
    <property type="molecule type" value="mRNA"/>
</dbReference>
<dbReference type="EMBL" id="AY096485">
    <property type="protein sequence ID" value="AAM20125.1"/>
    <property type="molecule type" value="mRNA"/>
</dbReference>
<dbReference type="PIR" id="T48019">
    <property type="entry name" value="T48019"/>
</dbReference>
<dbReference type="RefSeq" id="NP_191786.1">
    <property type="nucleotide sequence ID" value="NM_116092.4"/>
</dbReference>
<dbReference type="SMR" id="Q9M1P7"/>
<dbReference type="FunCoup" id="Q9M1P7">
    <property type="interactions" value="747"/>
</dbReference>
<dbReference type="STRING" id="3702.Q9M1P7"/>
<dbReference type="iPTMnet" id="Q9M1P7"/>
<dbReference type="PaxDb" id="3702-AT3G62270.1"/>
<dbReference type="ProteomicsDB" id="240377"/>
<dbReference type="EnsemblPlants" id="AT3G62270.1">
    <property type="protein sequence ID" value="AT3G62270.1"/>
    <property type="gene ID" value="AT3G62270"/>
</dbReference>
<dbReference type="GeneID" id="825400"/>
<dbReference type="Gramene" id="AT3G62270.1">
    <property type="protein sequence ID" value="AT3G62270.1"/>
    <property type="gene ID" value="AT3G62270"/>
</dbReference>
<dbReference type="KEGG" id="ath:AT3G62270"/>
<dbReference type="Araport" id="AT3G62270"/>
<dbReference type="TAIR" id="AT3G62270">
    <property type="gene designation" value="BOR2"/>
</dbReference>
<dbReference type="eggNOG" id="KOG1172">
    <property type="taxonomic scope" value="Eukaryota"/>
</dbReference>
<dbReference type="HOGENOM" id="CLU_002289_3_2_1"/>
<dbReference type="InParanoid" id="Q9M1P7"/>
<dbReference type="OMA" id="NYPRSHL"/>
<dbReference type="OrthoDB" id="1735926at2759"/>
<dbReference type="PhylomeDB" id="Q9M1P7"/>
<dbReference type="PRO" id="PR:Q9M1P7"/>
<dbReference type="Proteomes" id="UP000006548">
    <property type="component" value="Chromosome 3"/>
</dbReference>
<dbReference type="ExpressionAtlas" id="Q9M1P7">
    <property type="expression patterns" value="baseline and differential"/>
</dbReference>
<dbReference type="GO" id="GO:0005886">
    <property type="term" value="C:plasma membrane"/>
    <property type="evidence" value="ECO:0000314"/>
    <property type="project" value="TAIR"/>
</dbReference>
<dbReference type="GO" id="GO:0005452">
    <property type="term" value="F:solute:inorganic anion antiporter activity"/>
    <property type="evidence" value="ECO:0007669"/>
    <property type="project" value="InterPro"/>
</dbReference>
<dbReference type="GO" id="GO:0006820">
    <property type="term" value="P:monoatomic anion transport"/>
    <property type="evidence" value="ECO:0007669"/>
    <property type="project" value="InterPro"/>
</dbReference>
<dbReference type="GO" id="GO:0048364">
    <property type="term" value="P:root development"/>
    <property type="evidence" value="ECO:0000315"/>
    <property type="project" value="TAIR"/>
</dbReference>
<dbReference type="FunFam" id="1.10.287.570:FF:000004">
    <property type="entry name" value="probable boron transporter 2"/>
    <property type="match status" value="1"/>
</dbReference>
<dbReference type="Gene3D" id="1.10.287.570">
    <property type="entry name" value="Helical hairpin bin"/>
    <property type="match status" value="1"/>
</dbReference>
<dbReference type="InterPro" id="IPR011531">
    <property type="entry name" value="HCO3_transpt-like_TM_dom"/>
</dbReference>
<dbReference type="InterPro" id="IPR003020">
    <property type="entry name" value="HCO3_transpt_euk"/>
</dbReference>
<dbReference type="PANTHER" id="PTHR11453">
    <property type="entry name" value="ANION EXCHANGE PROTEIN"/>
    <property type="match status" value="1"/>
</dbReference>
<dbReference type="PANTHER" id="PTHR11453:SF115">
    <property type="entry name" value="BORON TRANSPORTER 2-RELATED"/>
    <property type="match status" value="1"/>
</dbReference>
<dbReference type="Pfam" id="PF00955">
    <property type="entry name" value="HCO3_cotransp"/>
    <property type="match status" value="3"/>
</dbReference>
<proteinExistence type="evidence at transcript level"/>
<accession>Q9M1P7</accession>
<comment type="function">
    <text evidence="1">Probable boron transporter. Boron is essential for maintaining the integrity of plants cell walls (By similarity).</text>
</comment>
<comment type="subcellular location">
    <subcellularLocation>
        <location evidence="1">Membrane</location>
        <topology evidence="1">Multi-pass membrane protein</topology>
    </subcellularLocation>
</comment>
<comment type="similarity">
    <text evidence="4">Belongs to the anion exchanger (TC 2.A.31.3) family.</text>
</comment>
<protein>
    <recommendedName>
        <fullName>Probable boron transporter 2</fullName>
    </recommendedName>
</protein>
<evidence type="ECO:0000250" key="1"/>
<evidence type="ECO:0000255" key="2"/>
<evidence type="ECO:0000256" key="3">
    <source>
        <dbReference type="SAM" id="MobiDB-lite"/>
    </source>
</evidence>
<evidence type="ECO:0000305" key="4"/>
<reference key="1">
    <citation type="journal article" date="2000" name="Nature">
        <title>Sequence and analysis of chromosome 3 of the plant Arabidopsis thaliana.</title>
        <authorList>
            <person name="Salanoubat M."/>
            <person name="Lemcke K."/>
            <person name="Rieger M."/>
            <person name="Ansorge W."/>
            <person name="Unseld M."/>
            <person name="Fartmann B."/>
            <person name="Valle G."/>
            <person name="Bloecker H."/>
            <person name="Perez-Alonso M."/>
            <person name="Obermaier B."/>
            <person name="Delseny M."/>
            <person name="Boutry M."/>
            <person name="Grivell L.A."/>
            <person name="Mache R."/>
            <person name="Puigdomenech P."/>
            <person name="De Simone V."/>
            <person name="Choisne N."/>
            <person name="Artiguenave F."/>
            <person name="Robert C."/>
            <person name="Brottier P."/>
            <person name="Wincker P."/>
            <person name="Cattolico L."/>
            <person name="Weissenbach J."/>
            <person name="Saurin W."/>
            <person name="Quetier F."/>
            <person name="Schaefer M."/>
            <person name="Mueller-Auer S."/>
            <person name="Gabel C."/>
            <person name="Fuchs M."/>
            <person name="Benes V."/>
            <person name="Wurmbach E."/>
            <person name="Drzonek H."/>
            <person name="Erfle H."/>
            <person name="Jordan N."/>
            <person name="Bangert S."/>
            <person name="Wiedelmann R."/>
            <person name="Kranz H."/>
            <person name="Voss H."/>
            <person name="Holland R."/>
            <person name="Brandt P."/>
            <person name="Nyakatura G."/>
            <person name="Vezzi A."/>
            <person name="D'Angelo M."/>
            <person name="Pallavicini A."/>
            <person name="Toppo S."/>
            <person name="Simionati B."/>
            <person name="Conrad A."/>
            <person name="Hornischer K."/>
            <person name="Kauer G."/>
            <person name="Loehnert T.-H."/>
            <person name="Nordsiek G."/>
            <person name="Reichelt J."/>
            <person name="Scharfe M."/>
            <person name="Schoen O."/>
            <person name="Bargues M."/>
            <person name="Terol J."/>
            <person name="Climent J."/>
            <person name="Navarro P."/>
            <person name="Collado C."/>
            <person name="Perez-Perez A."/>
            <person name="Ottenwaelder B."/>
            <person name="Duchemin D."/>
            <person name="Cooke R."/>
            <person name="Laudie M."/>
            <person name="Berger-Llauro C."/>
            <person name="Purnelle B."/>
            <person name="Masuy D."/>
            <person name="de Haan M."/>
            <person name="Maarse A.C."/>
            <person name="Alcaraz J.-P."/>
            <person name="Cottet A."/>
            <person name="Casacuberta E."/>
            <person name="Monfort A."/>
            <person name="Argiriou A."/>
            <person name="Flores M."/>
            <person name="Liguori R."/>
            <person name="Vitale D."/>
            <person name="Mannhaupt G."/>
            <person name="Haase D."/>
            <person name="Schoof H."/>
            <person name="Rudd S."/>
            <person name="Zaccaria P."/>
            <person name="Mewes H.-W."/>
            <person name="Mayer K.F.X."/>
            <person name="Kaul S."/>
            <person name="Town C.D."/>
            <person name="Koo H.L."/>
            <person name="Tallon L.J."/>
            <person name="Jenkins J."/>
            <person name="Rooney T."/>
            <person name="Rizzo M."/>
            <person name="Walts A."/>
            <person name="Utterback T."/>
            <person name="Fujii C.Y."/>
            <person name="Shea T.P."/>
            <person name="Creasy T.H."/>
            <person name="Haas B."/>
            <person name="Maiti R."/>
            <person name="Wu D."/>
            <person name="Peterson J."/>
            <person name="Van Aken S."/>
            <person name="Pai G."/>
            <person name="Militscher J."/>
            <person name="Sellers P."/>
            <person name="Gill J.E."/>
            <person name="Feldblyum T.V."/>
            <person name="Preuss D."/>
            <person name="Lin X."/>
            <person name="Nierman W.C."/>
            <person name="Salzberg S.L."/>
            <person name="White O."/>
            <person name="Venter J.C."/>
            <person name="Fraser C.M."/>
            <person name="Kaneko T."/>
            <person name="Nakamura Y."/>
            <person name="Sato S."/>
            <person name="Kato T."/>
            <person name="Asamizu E."/>
            <person name="Sasamoto S."/>
            <person name="Kimura T."/>
            <person name="Idesawa K."/>
            <person name="Kawashima K."/>
            <person name="Kishida Y."/>
            <person name="Kiyokawa C."/>
            <person name="Kohara M."/>
            <person name="Matsumoto M."/>
            <person name="Matsuno A."/>
            <person name="Muraki A."/>
            <person name="Nakayama S."/>
            <person name="Nakazaki N."/>
            <person name="Shinpo S."/>
            <person name="Takeuchi C."/>
            <person name="Wada T."/>
            <person name="Watanabe A."/>
            <person name="Yamada M."/>
            <person name="Yasuda M."/>
            <person name="Tabata S."/>
        </authorList>
    </citation>
    <scope>NUCLEOTIDE SEQUENCE [LARGE SCALE GENOMIC DNA]</scope>
    <source>
        <strain>cv. Columbia</strain>
    </source>
</reference>
<reference key="2">
    <citation type="journal article" date="2017" name="Plant J.">
        <title>Araport11: a complete reannotation of the Arabidopsis thaliana reference genome.</title>
        <authorList>
            <person name="Cheng C.Y."/>
            <person name="Krishnakumar V."/>
            <person name="Chan A.P."/>
            <person name="Thibaud-Nissen F."/>
            <person name="Schobel S."/>
            <person name="Town C.D."/>
        </authorList>
    </citation>
    <scope>GENOME REANNOTATION</scope>
    <source>
        <strain>cv. Columbia</strain>
    </source>
</reference>
<reference key="3">
    <citation type="journal article" date="2003" name="Science">
        <title>Empirical analysis of transcriptional activity in the Arabidopsis genome.</title>
        <authorList>
            <person name="Yamada K."/>
            <person name="Lim J."/>
            <person name="Dale J.M."/>
            <person name="Chen H."/>
            <person name="Shinn P."/>
            <person name="Palm C.J."/>
            <person name="Southwick A.M."/>
            <person name="Wu H.C."/>
            <person name="Kim C.J."/>
            <person name="Nguyen M."/>
            <person name="Pham P.K."/>
            <person name="Cheuk R.F."/>
            <person name="Karlin-Newmann G."/>
            <person name="Liu S.X."/>
            <person name="Lam B."/>
            <person name="Sakano H."/>
            <person name="Wu T."/>
            <person name="Yu G."/>
            <person name="Miranda M."/>
            <person name="Quach H.L."/>
            <person name="Tripp M."/>
            <person name="Chang C.H."/>
            <person name="Lee J.M."/>
            <person name="Toriumi M.J."/>
            <person name="Chan M.M."/>
            <person name="Tang C.C."/>
            <person name="Onodera C.S."/>
            <person name="Deng J.M."/>
            <person name="Akiyama K."/>
            <person name="Ansari Y."/>
            <person name="Arakawa T."/>
            <person name="Banh J."/>
            <person name="Banno F."/>
            <person name="Bowser L."/>
            <person name="Brooks S.Y."/>
            <person name="Carninci P."/>
            <person name="Chao Q."/>
            <person name="Choy N."/>
            <person name="Enju A."/>
            <person name="Goldsmith A.D."/>
            <person name="Gurjal M."/>
            <person name="Hansen N.F."/>
            <person name="Hayashizaki Y."/>
            <person name="Johnson-Hopson C."/>
            <person name="Hsuan V.W."/>
            <person name="Iida K."/>
            <person name="Karnes M."/>
            <person name="Khan S."/>
            <person name="Koesema E."/>
            <person name="Ishida J."/>
            <person name="Jiang P.X."/>
            <person name="Jones T."/>
            <person name="Kawai J."/>
            <person name="Kamiya A."/>
            <person name="Meyers C."/>
            <person name="Nakajima M."/>
            <person name="Narusaka M."/>
            <person name="Seki M."/>
            <person name="Sakurai T."/>
            <person name="Satou M."/>
            <person name="Tamse R."/>
            <person name="Vaysberg M."/>
            <person name="Wallender E.K."/>
            <person name="Wong C."/>
            <person name="Yamamura Y."/>
            <person name="Yuan S."/>
            <person name="Shinozaki K."/>
            <person name="Davis R.W."/>
            <person name="Theologis A."/>
            <person name="Ecker J.R."/>
        </authorList>
    </citation>
    <scope>NUCLEOTIDE SEQUENCE [LARGE SCALE MRNA]</scope>
    <source>
        <strain>cv. Columbia</strain>
    </source>
</reference>
<sequence length="703" mass="78614">MEETFVPFEGIKNDLKGRLMCYKQDWTGGIKAGFRILAPTTYIFFASAIPVISFGEQLERSTDGVLTAVQTLASTAICGIIHSIIGGQPLLILGVAEPTVIMYTFMFNFAKGRPELGRNLFLAWSGWVCVWTSLILFVLAICGACSFINRFTRVAGELFGLLIAMLFMQQAIKGLVDEFRAPAREDLKLVEFLPSWRFANGMFALVLSFGLLITALRSRKARSWRYGTGWLRSLVADYGVPLMVLVWTGVSYIPTGDVPKGIPRRLFSPNPWSPGAYENWTVVKEMLQVPIVYIIGAFIPATMIAVLYYFDHSVASQLAQQKEFNLRKPSSYHYDLLLLGFLTLMCGLLGIPPSNGVIPQSPMHTKSLATLKYQLLRNRLVATARKSIKQNASLGQLYGNMQDVYNQMQTPLVYQQPQGLKELRESTIQATTFTGNLDAPVDETLFDIEKEIDDLLPIEVKEQRVSNLLQAVMVGGCVAAMPLLKMIPTSVLWGYFAFMAIESLPGNQFWERILLLFTAPSRRFKVLEDNHATFVETVPFKTIAMFTIFQTTYLLTCFGLTWIPIAGVMFPLLIMFLIPVRQYILPRFFKSAHLQDLDAAEYEEAPALPFHLAVPEAEMGSTASYPCDSEILDEFITRSRGEFRHTCSPKVTSSTSTPVYNRNLSQVFSPRVIDLRGEMSPRLSGKGQNSPKPSPLNPSSSSK</sequence>
<gene>
    <name type="primary">BOR2</name>
    <name type="ordered locus">At3g62270</name>
    <name type="ORF">T17J13.230</name>
</gene>
<organism>
    <name type="scientific">Arabidopsis thaliana</name>
    <name type="common">Mouse-ear cress</name>
    <dbReference type="NCBI Taxonomy" id="3702"/>
    <lineage>
        <taxon>Eukaryota</taxon>
        <taxon>Viridiplantae</taxon>
        <taxon>Streptophyta</taxon>
        <taxon>Embryophyta</taxon>
        <taxon>Tracheophyta</taxon>
        <taxon>Spermatophyta</taxon>
        <taxon>Magnoliopsida</taxon>
        <taxon>eudicotyledons</taxon>
        <taxon>Gunneridae</taxon>
        <taxon>Pentapetalae</taxon>
        <taxon>rosids</taxon>
        <taxon>malvids</taxon>
        <taxon>Brassicales</taxon>
        <taxon>Brassicaceae</taxon>
        <taxon>Camelineae</taxon>
        <taxon>Arabidopsis</taxon>
    </lineage>
</organism>
<feature type="chain" id="PRO_0000079238" description="Probable boron transporter 2">
    <location>
        <begin position="1"/>
        <end position="703"/>
    </location>
</feature>
<feature type="topological domain" description="Cytoplasmic" evidence="2">
    <location>
        <begin position="1"/>
        <end position="35"/>
    </location>
</feature>
<feature type="transmembrane region" description="Helical" evidence="2">
    <location>
        <begin position="36"/>
        <end position="56"/>
    </location>
</feature>
<feature type="topological domain" description="Extracellular" evidence="2">
    <location>
        <begin position="57"/>
        <end position="75"/>
    </location>
</feature>
<feature type="transmembrane region" description="Helical" evidence="2">
    <location>
        <begin position="76"/>
        <end position="96"/>
    </location>
</feature>
<feature type="topological domain" description="Cytoplasmic" evidence="2">
    <location>
        <begin position="97"/>
        <end position="120"/>
    </location>
</feature>
<feature type="transmembrane region" description="Helical" evidence="2">
    <location>
        <begin position="121"/>
        <end position="141"/>
    </location>
</feature>
<feature type="topological domain" description="Extracellular" evidence="2">
    <location>
        <begin position="142"/>
        <end position="155"/>
    </location>
</feature>
<feature type="transmembrane region" description="Helical" evidence="2">
    <location>
        <begin position="156"/>
        <end position="176"/>
    </location>
</feature>
<feature type="topological domain" description="Cytoplasmic" evidence="2">
    <location>
        <begin position="177"/>
        <end position="195"/>
    </location>
</feature>
<feature type="transmembrane region" description="Helical" evidence="2">
    <location>
        <begin position="196"/>
        <end position="216"/>
    </location>
</feature>
<feature type="topological domain" description="Extracellular" evidence="2">
    <location>
        <begin position="217"/>
        <end position="233"/>
    </location>
</feature>
<feature type="transmembrane region" description="Helical" evidence="2">
    <location>
        <begin position="234"/>
        <end position="254"/>
    </location>
</feature>
<feature type="topological domain" description="Cytoplasmic" evidence="2">
    <location>
        <begin position="255"/>
        <end position="289"/>
    </location>
</feature>
<feature type="transmembrane region" description="Helical" evidence="2">
    <location>
        <begin position="290"/>
        <end position="310"/>
    </location>
</feature>
<feature type="topological domain" description="Extracellular" evidence="2">
    <location>
        <begin position="311"/>
        <end position="337"/>
    </location>
</feature>
<feature type="transmembrane region" description="Helical" evidence="2">
    <location>
        <begin position="338"/>
        <end position="358"/>
    </location>
</feature>
<feature type="topological domain" description="Cytoplasmic" evidence="2">
    <location>
        <begin position="359"/>
        <end position="480"/>
    </location>
</feature>
<feature type="transmembrane region" description="Helical" evidence="2">
    <location>
        <begin position="481"/>
        <end position="501"/>
    </location>
</feature>
<feature type="topological domain" description="Extracellular" evidence="2">
    <location>
        <begin position="502"/>
        <end position="557"/>
    </location>
</feature>
<feature type="transmembrane region" description="Helical" evidence="2">
    <location>
        <begin position="558"/>
        <end position="578"/>
    </location>
</feature>
<feature type="topological domain" description="Cytoplasmic" evidence="2">
    <location>
        <begin position="579"/>
        <end position="703"/>
    </location>
</feature>
<feature type="region of interest" description="Disordered" evidence="3">
    <location>
        <begin position="678"/>
        <end position="703"/>
    </location>
</feature>
<keyword id="KW-0039">Anion exchange</keyword>
<keyword id="KW-0406">Ion transport</keyword>
<keyword id="KW-0472">Membrane</keyword>
<keyword id="KW-1185">Reference proteome</keyword>
<keyword id="KW-0812">Transmembrane</keyword>
<keyword id="KW-1133">Transmembrane helix</keyword>
<keyword id="KW-0813">Transport</keyword>